<evidence type="ECO:0000255" key="1">
    <source>
        <dbReference type="HAMAP-Rule" id="MF_00445"/>
    </source>
</evidence>
<keyword id="KW-0997">Cell inner membrane</keyword>
<keyword id="KW-1003">Cell membrane</keyword>
<keyword id="KW-0472">Membrane</keyword>
<keyword id="KW-0520">NAD</keyword>
<keyword id="KW-0874">Quinone</keyword>
<keyword id="KW-1185">Reference proteome</keyword>
<keyword id="KW-1278">Translocase</keyword>
<keyword id="KW-0812">Transmembrane</keyword>
<keyword id="KW-1133">Transmembrane helix</keyword>
<keyword id="KW-0813">Transport</keyword>
<keyword id="KW-0830">Ubiquinone</keyword>
<proteinExistence type="inferred from homology"/>
<sequence length="518" mass="55505">MESFLPLVDENLRSALWFRPEMALTFGTLVLFVLDLVFRRSQARVALLTAGALAVLAAAAGLLAIQPPDAQALFNGMLANDAFAIFFKWLFLAAGALTVIIAAQGRDFPPERIGQFFALLMAIVLGMFMMASATDLLMVYLSLELVSMVSYVLAGFRKGDRKATEGSLKYVIYGGVASGVMLFGMSYLYGLTGTTSLHELGAQLQALQAGSAVSVAATRVALVVAIVFVTAGIGYKVAAVPWHMWCPDVYEGAPTPFTAFLSVGPKAAGFALAIRIFHSALAGPSSPVTGFAESLAGIPWPAVVGVIAAVTMTLGNLTALGQTNLKRLLAYSSIAHAGYTLMGLSAVSDRGMQSVMIYMLVYLVMNVGAFLVVILVAESTGSESILDYRGLSKRHPSAAVAFAIFLFSLTGLPPFAGFVGKWYLFYAVFERIDGPGGAWYAWLALIGALNTAIALYYYVRVIRAMFIDAPYVAEAPPVRLRVGYQVMLGAFSVAILVFGIWWTPMVRWTEASLQLFRG</sequence>
<gene>
    <name evidence="1" type="primary">nuoN</name>
    <name type="ordered locus">Anae109_1279</name>
</gene>
<name>NUON_ANADF</name>
<feature type="chain" id="PRO_0000391094" description="NADH-quinone oxidoreductase subunit N">
    <location>
        <begin position="1"/>
        <end position="518"/>
    </location>
</feature>
<feature type="transmembrane region" description="Helical" evidence="1">
    <location>
        <begin position="18"/>
        <end position="38"/>
    </location>
</feature>
<feature type="transmembrane region" description="Helical" evidence="1">
    <location>
        <begin position="45"/>
        <end position="65"/>
    </location>
</feature>
<feature type="transmembrane region" description="Helical" evidence="1">
    <location>
        <begin position="82"/>
        <end position="102"/>
    </location>
</feature>
<feature type="transmembrane region" description="Helical" evidence="1">
    <location>
        <begin position="113"/>
        <end position="133"/>
    </location>
</feature>
<feature type="transmembrane region" description="Helical" evidence="1">
    <location>
        <begin position="136"/>
        <end position="156"/>
    </location>
</feature>
<feature type="transmembrane region" description="Helical" evidence="1">
    <location>
        <begin position="171"/>
        <end position="191"/>
    </location>
</feature>
<feature type="transmembrane region" description="Helical" evidence="1">
    <location>
        <begin position="220"/>
        <end position="240"/>
    </location>
</feature>
<feature type="transmembrane region" description="Helical" evidence="1">
    <location>
        <begin position="254"/>
        <end position="274"/>
    </location>
</feature>
<feature type="transmembrane region" description="Helical" evidence="1">
    <location>
        <begin position="295"/>
        <end position="315"/>
    </location>
</feature>
<feature type="transmembrane region" description="Helical" evidence="1">
    <location>
        <begin position="328"/>
        <end position="348"/>
    </location>
</feature>
<feature type="transmembrane region" description="Helical" evidence="1">
    <location>
        <begin position="355"/>
        <end position="375"/>
    </location>
</feature>
<feature type="transmembrane region" description="Helical" evidence="1">
    <location>
        <begin position="399"/>
        <end position="419"/>
    </location>
</feature>
<feature type="transmembrane region" description="Helical" evidence="1">
    <location>
        <begin position="439"/>
        <end position="459"/>
    </location>
</feature>
<feature type="transmembrane region" description="Helical" evidence="1">
    <location>
        <begin position="486"/>
        <end position="506"/>
    </location>
</feature>
<comment type="function">
    <text evidence="1">NDH-1 shuttles electrons from NADH, via FMN and iron-sulfur (Fe-S) centers, to quinones in the respiratory chain. The immediate electron acceptor for the enzyme in this species is believed to be ubiquinone. Couples the redox reaction to proton translocation (for every two electrons transferred, four hydrogen ions are translocated across the cytoplasmic membrane), and thus conserves the redox energy in a proton gradient.</text>
</comment>
<comment type="catalytic activity">
    <reaction evidence="1">
        <text>a quinone + NADH + 5 H(+)(in) = a quinol + NAD(+) + 4 H(+)(out)</text>
        <dbReference type="Rhea" id="RHEA:57888"/>
        <dbReference type="ChEBI" id="CHEBI:15378"/>
        <dbReference type="ChEBI" id="CHEBI:24646"/>
        <dbReference type="ChEBI" id="CHEBI:57540"/>
        <dbReference type="ChEBI" id="CHEBI:57945"/>
        <dbReference type="ChEBI" id="CHEBI:132124"/>
    </reaction>
</comment>
<comment type="subunit">
    <text evidence="1">NDH-1 is composed of 14 different subunits. Subunits NuoA, H, J, K, L, M, N constitute the membrane sector of the complex.</text>
</comment>
<comment type="subcellular location">
    <subcellularLocation>
        <location evidence="1">Cell inner membrane</location>
        <topology evidence="1">Multi-pass membrane protein</topology>
    </subcellularLocation>
</comment>
<comment type="similarity">
    <text evidence="1">Belongs to the complex I subunit 2 family.</text>
</comment>
<reference key="1">
    <citation type="journal article" date="2015" name="Genome Announc.">
        <title>Complete genome sequence of Anaeromyxobacter sp. Fw109-5, an anaerobic, metal-reducing bacterium isolated from a contaminated subsurface environment.</title>
        <authorList>
            <person name="Hwang C."/>
            <person name="Copeland A."/>
            <person name="Lucas S."/>
            <person name="Lapidus A."/>
            <person name="Barry K."/>
            <person name="Glavina Del Rio T."/>
            <person name="Dalin E."/>
            <person name="Tice H."/>
            <person name="Pitluck S."/>
            <person name="Sims D."/>
            <person name="Brettin T."/>
            <person name="Bruce D.C."/>
            <person name="Detter J.C."/>
            <person name="Han C.S."/>
            <person name="Schmutz J."/>
            <person name="Larimer F.W."/>
            <person name="Land M.L."/>
            <person name="Hauser L.J."/>
            <person name="Kyrpides N."/>
            <person name="Lykidis A."/>
            <person name="Richardson P."/>
            <person name="Belieav A."/>
            <person name="Sanford R.A."/>
            <person name="Loeffler F.E."/>
            <person name="Fields M.W."/>
        </authorList>
    </citation>
    <scope>NUCLEOTIDE SEQUENCE [LARGE SCALE GENOMIC DNA]</scope>
    <source>
        <strain>Fw109-5</strain>
    </source>
</reference>
<organism>
    <name type="scientific">Anaeromyxobacter sp. (strain Fw109-5)</name>
    <dbReference type="NCBI Taxonomy" id="404589"/>
    <lineage>
        <taxon>Bacteria</taxon>
        <taxon>Pseudomonadati</taxon>
        <taxon>Myxococcota</taxon>
        <taxon>Myxococcia</taxon>
        <taxon>Myxococcales</taxon>
        <taxon>Cystobacterineae</taxon>
        <taxon>Anaeromyxobacteraceae</taxon>
        <taxon>Anaeromyxobacter</taxon>
    </lineage>
</organism>
<protein>
    <recommendedName>
        <fullName evidence="1">NADH-quinone oxidoreductase subunit N</fullName>
        <ecNumber evidence="1">7.1.1.-</ecNumber>
    </recommendedName>
    <alternativeName>
        <fullName evidence="1">NADH dehydrogenase I subunit N</fullName>
    </alternativeName>
    <alternativeName>
        <fullName evidence="1">NDH-1 subunit N</fullName>
    </alternativeName>
</protein>
<dbReference type="EC" id="7.1.1.-" evidence="1"/>
<dbReference type="EMBL" id="CP000769">
    <property type="protein sequence ID" value="ABS25487.1"/>
    <property type="molecule type" value="Genomic_DNA"/>
</dbReference>
<dbReference type="RefSeq" id="WP_011985593.1">
    <property type="nucleotide sequence ID" value="NC_009675.1"/>
</dbReference>
<dbReference type="SMR" id="A7H9U1"/>
<dbReference type="STRING" id="404589.Anae109_1279"/>
<dbReference type="KEGG" id="afw:Anae109_1279"/>
<dbReference type="eggNOG" id="COG1007">
    <property type="taxonomic scope" value="Bacteria"/>
</dbReference>
<dbReference type="HOGENOM" id="CLU_007100_1_5_7"/>
<dbReference type="OrthoDB" id="9805769at2"/>
<dbReference type="Proteomes" id="UP000006382">
    <property type="component" value="Chromosome"/>
</dbReference>
<dbReference type="GO" id="GO:0005886">
    <property type="term" value="C:plasma membrane"/>
    <property type="evidence" value="ECO:0007669"/>
    <property type="project" value="UniProtKB-SubCell"/>
</dbReference>
<dbReference type="GO" id="GO:0008137">
    <property type="term" value="F:NADH dehydrogenase (ubiquinone) activity"/>
    <property type="evidence" value="ECO:0007669"/>
    <property type="project" value="InterPro"/>
</dbReference>
<dbReference type="GO" id="GO:0050136">
    <property type="term" value="F:NADH:ubiquinone reductase (non-electrogenic) activity"/>
    <property type="evidence" value="ECO:0007669"/>
    <property type="project" value="UniProtKB-UniRule"/>
</dbReference>
<dbReference type="GO" id="GO:0048038">
    <property type="term" value="F:quinone binding"/>
    <property type="evidence" value="ECO:0007669"/>
    <property type="project" value="UniProtKB-KW"/>
</dbReference>
<dbReference type="GO" id="GO:0042773">
    <property type="term" value="P:ATP synthesis coupled electron transport"/>
    <property type="evidence" value="ECO:0007669"/>
    <property type="project" value="InterPro"/>
</dbReference>
<dbReference type="HAMAP" id="MF_00445">
    <property type="entry name" value="NDH1_NuoN_1"/>
    <property type="match status" value="1"/>
</dbReference>
<dbReference type="InterPro" id="IPR010096">
    <property type="entry name" value="NADH-Q_OxRdtase_suN/2"/>
</dbReference>
<dbReference type="InterPro" id="IPR001750">
    <property type="entry name" value="ND/Mrp_TM"/>
</dbReference>
<dbReference type="NCBIfam" id="TIGR01770">
    <property type="entry name" value="NDH_I_N"/>
    <property type="match status" value="1"/>
</dbReference>
<dbReference type="PANTHER" id="PTHR22773">
    <property type="entry name" value="NADH DEHYDROGENASE"/>
    <property type="match status" value="1"/>
</dbReference>
<dbReference type="Pfam" id="PF00361">
    <property type="entry name" value="Proton_antipo_M"/>
    <property type="match status" value="1"/>
</dbReference>
<accession>A7H9U1</accession>